<protein>
    <recommendedName>
        <fullName evidence="1">Chaperonin GroEL 2</fullName>
        <ecNumber evidence="1">5.6.1.7</ecNumber>
    </recommendedName>
    <alternativeName>
        <fullName evidence="1">60 kDa chaperonin 2</fullName>
    </alternativeName>
    <alternativeName>
        <fullName evidence="1">Chaperonin-60 2</fullName>
        <shortName evidence="1">Cpn60 2</shortName>
    </alternativeName>
</protein>
<keyword id="KW-0067">ATP-binding</keyword>
<keyword id="KW-0143">Chaperone</keyword>
<keyword id="KW-0963">Cytoplasm</keyword>
<keyword id="KW-0413">Isomerase</keyword>
<keyword id="KW-0547">Nucleotide-binding</keyword>
<keyword id="KW-1185">Reference proteome</keyword>
<accession>Q9KLC6</accession>
<sequence length="530" mass="56199">MAAKHVLFSTDARQKMLSGVNLLANAVKVTLGPKGRHVVLNKSYGAPTITKDGVSVAKEIELADKFENMGAQMLKQVASKANDEAGDGTTTATVLAQALINEGMKAVAAGMNPMDLKRGIDKAVSAAVEKLHQLAKPCSDTQSITQVGAISANSDHAIGEIIAQAMEKVGRNGVITVEEGQALQNELSVVEGMQFDRGYLSPYFINQPKAGCVELENPYVLLVDKKISHIRELLPILESVAKASRSLLIIAEDVDGDALATLVVNSMRGIIKVAAVKAPGFGEQRKAMLEDIAALTAGRVISEEIGLELEKVTLDDLGSAKKVTINKDNTTIVDGAAEPSALQDRIAQIQHQLEHTTSQYDRDKLQQRIAKLSGGVAVIKIGAATEVEMKEKKDRVDDALHATRAAVEEGIVAGGGVALLKIANELSNLQGDNDDQNVGIRIALRAMEEPLRQIAINAGDEASVIANQVKTGDEHYGYNAATGQFGNMLEMGILDPAKVTRSALQFAASIAGLMITTEAMVSEVDKESAA</sequence>
<gene>
    <name evidence="1" type="primary">groEL2</name>
    <name evidence="1" type="synonym">groL2</name>
    <name type="ordered locus">VC_A0820</name>
</gene>
<reference key="1">
    <citation type="journal article" date="2000" name="Nature">
        <title>DNA sequence of both chromosomes of the cholera pathogen Vibrio cholerae.</title>
        <authorList>
            <person name="Heidelberg J.F."/>
            <person name="Eisen J.A."/>
            <person name="Nelson W.C."/>
            <person name="Clayton R.A."/>
            <person name="Gwinn M.L."/>
            <person name="Dodson R.J."/>
            <person name="Haft D.H."/>
            <person name="Hickey E.K."/>
            <person name="Peterson J.D."/>
            <person name="Umayam L.A."/>
            <person name="Gill S.R."/>
            <person name="Nelson K.E."/>
            <person name="Read T.D."/>
            <person name="Tettelin H."/>
            <person name="Richardson D.L."/>
            <person name="Ermolaeva M.D."/>
            <person name="Vamathevan J.J."/>
            <person name="Bass S."/>
            <person name="Qin H."/>
            <person name="Dragoi I."/>
            <person name="Sellers P."/>
            <person name="McDonald L.A."/>
            <person name="Utterback T.R."/>
            <person name="Fleischmann R.D."/>
            <person name="Nierman W.C."/>
            <person name="White O."/>
            <person name="Salzberg S.L."/>
            <person name="Smith H.O."/>
            <person name="Colwell R.R."/>
            <person name="Mekalanos J.J."/>
            <person name="Venter J.C."/>
            <person name="Fraser C.M."/>
        </authorList>
    </citation>
    <scope>NUCLEOTIDE SEQUENCE [LARGE SCALE GENOMIC DNA]</scope>
    <source>
        <strain>ATCC 39315 / El Tor Inaba N16961</strain>
    </source>
</reference>
<name>CH602_VIBCH</name>
<dbReference type="EC" id="5.6.1.7" evidence="1"/>
<dbReference type="EMBL" id="AE003853">
    <property type="protein sequence ID" value="AAF96718.1"/>
    <property type="molecule type" value="Genomic_DNA"/>
</dbReference>
<dbReference type="PIR" id="D82412">
    <property type="entry name" value="D82412"/>
</dbReference>
<dbReference type="RefSeq" id="NP_233206.1">
    <property type="nucleotide sequence ID" value="NC_002506.1"/>
</dbReference>
<dbReference type="SMR" id="Q9KLC6"/>
<dbReference type="STRING" id="243277.VC_A0820"/>
<dbReference type="DNASU" id="2612368"/>
<dbReference type="EnsemblBacteria" id="AAF96718">
    <property type="protein sequence ID" value="AAF96718"/>
    <property type="gene ID" value="VC_A0820"/>
</dbReference>
<dbReference type="KEGG" id="vch:VC_A0820"/>
<dbReference type="PATRIC" id="fig|243277.26.peg.3440"/>
<dbReference type="eggNOG" id="COG0459">
    <property type="taxonomic scope" value="Bacteria"/>
</dbReference>
<dbReference type="HOGENOM" id="CLU_016503_3_0_6"/>
<dbReference type="Proteomes" id="UP000000584">
    <property type="component" value="Chromosome 2"/>
</dbReference>
<dbReference type="GO" id="GO:1990220">
    <property type="term" value="C:GroEL-GroES complex"/>
    <property type="evidence" value="ECO:0000318"/>
    <property type="project" value="GO_Central"/>
</dbReference>
<dbReference type="GO" id="GO:0005524">
    <property type="term" value="F:ATP binding"/>
    <property type="evidence" value="ECO:0000318"/>
    <property type="project" value="GO_Central"/>
</dbReference>
<dbReference type="GO" id="GO:0140662">
    <property type="term" value="F:ATP-dependent protein folding chaperone"/>
    <property type="evidence" value="ECO:0007669"/>
    <property type="project" value="InterPro"/>
</dbReference>
<dbReference type="GO" id="GO:0016853">
    <property type="term" value="F:isomerase activity"/>
    <property type="evidence" value="ECO:0007669"/>
    <property type="project" value="UniProtKB-KW"/>
</dbReference>
<dbReference type="GO" id="GO:0051082">
    <property type="term" value="F:unfolded protein binding"/>
    <property type="evidence" value="ECO:0000318"/>
    <property type="project" value="GO_Central"/>
</dbReference>
<dbReference type="GO" id="GO:0051085">
    <property type="term" value="P:chaperone cofactor-dependent protein refolding"/>
    <property type="evidence" value="ECO:0000318"/>
    <property type="project" value="GO_Central"/>
</dbReference>
<dbReference type="GO" id="GO:0042026">
    <property type="term" value="P:protein refolding"/>
    <property type="evidence" value="ECO:0007669"/>
    <property type="project" value="UniProtKB-UniRule"/>
</dbReference>
<dbReference type="GO" id="GO:0009408">
    <property type="term" value="P:response to heat"/>
    <property type="evidence" value="ECO:0000318"/>
    <property type="project" value="GO_Central"/>
</dbReference>
<dbReference type="CDD" id="cd03344">
    <property type="entry name" value="GroEL"/>
    <property type="match status" value="1"/>
</dbReference>
<dbReference type="FunFam" id="1.10.560.10:FF:000001">
    <property type="entry name" value="60 kDa chaperonin"/>
    <property type="match status" value="1"/>
</dbReference>
<dbReference type="FunFam" id="3.50.7.10:FF:000001">
    <property type="entry name" value="60 kDa chaperonin"/>
    <property type="match status" value="1"/>
</dbReference>
<dbReference type="Gene3D" id="3.50.7.10">
    <property type="entry name" value="GroEL"/>
    <property type="match status" value="1"/>
</dbReference>
<dbReference type="Gene3D" id="1.10.560.10">
    <property type="entry name" value="GroEL-like equatorial domain"/>
    <property type="match status" value="1"/>
</dbReference>
<dbReference type="Gene3D" id="3.30.260.10">
    <property type="entry name" value="TCP-1-like chaperonin intermediate domain"/>
    <property type="match status" value="1"/>
</dbReference>
<dbReference type="HAMAP" id="MF_00600">
    <property type="entry name" value="CH60"/>
    <property type="match status" value="1"/>
</dbReference>
<dbReference type="InterPro" id="IPR018370">
    <property type="entry name" value="Chaperonin_Cpn60_CS"/>
</dbReference>
<dbReference type="InterPro" id="IPR001844">
    <property type="entry name" value="Cpn60/GroEL"/>
</dbReference>
<dbReference type="InterPro" id="IPR002423">
    <property type="entry name" value="Cpn60/GroEL/TCP-1"/>
</dbReference>
<dbReference type="InterPro" id="IPR027409">
    <property type="entry name" value="GroEL-like_apical_dom_sf"/>
</dbReference>
<dbReference type="InterPro" id="IPR027413">
    <property type="entry name" value="GROEL-like_equatorial_sf"/>
</dbReference>
<dbReference type="InterPro" id="IPR027410">
    <property type="entry name" value="TCP-1-like_intermed_sf"/>
</dbReference>
<dbReference type="NCBIfam" id="TIGR02348">
    <property type="entry name" value="GroEL"/>
    <property type="match status" value="1"/>
</dbReference>
<dbReference type="NCBIfam" id="NF000592">
    <property type="entry name" value="PRK00013.1"/>
    <property type="match status" value="1"/>
</dbReference>
<dbReference type="NCBIfam" id="NF009487">
    <property type="entry name" value="PRK12849.1"/>
    <property type="match status" value="1"/>
</dbReference>
<dbReference type="NCBIfam" id="NF009488">
    <property type="entry name" value="PRK12850.1"/>
    <property type="match status" value="1"/>
</dbReference>
<dbReference type="NCBIfam" id="NF009489">
    <property type="entry name" value="PRK12851.1"/>
    <property type="match status" value="1"/>
</dbReference>
<dbReference type="PANTHER" id="PTHR45633">
    <property type="entry name" value="60 KDA HEAT SHOCK PROTEIN, MITOCHONDRIAL"/>
    <property type="match status" value="1"/>
</dbReference>
<dbReference type="Pfam" id="PF00118">
    <property type="entry name" value="Cpn60_TCP1"/>
    <property type="match status" value="1"/>
</dbReference>
<dbReference type="PRINTS" id="PR00298">
    <property type="entry name" value="CHAPERONIN60"/>
</dbReference>
<dbReference type="SUPFAM" id="SSF52029">
    <property type="entry name" value="GroEL apical domain-like"/>
    <property type="match status" value="1"/>
</dbReference>
<dbReference type="SUPFAM" id="SSF48592">
    <property type="entry name" value="GroEL equatorial domain-like"/>
    <property type="match status" value="1"/>
</dbReference>
<dbReference type="SUPFAM" id="SSF54849">
    <property type="entry name" value="GroEL-intermediate domain like"/>
    <property type="match status" value="1"/>
</dbReference>
<dbReference type="PROSITE" id="PS00296">
    <property type="entry name" value="CHAPERONINS_CPN60"/>
    <property type="match status" value="1"/>
</dbReference>
<feature type="chain" id="PRO_0000063594" description="Chaperonin GroEL 2">
    <location>
        <begin position="1"/>
        <end position="530"/>
    </location>
</feature>
<feature type="binding site" evidence="1">
    <location>
        <begin position="30"/>
        <end position="33"/>
    </location>
    <ligand>
        <name>ATP</name>
        <dbReference type="ChEBI" id="CHEBI:30616"/>
    </ligand>
</feature>
<feature type="binding site" evidence="1">
    <location>
        <position position="51"/>
    </location>
    <ligand>
        <name>ATP</name>
        <dbReference type="ChEBI" id="CHEBI:30616"/>
    </ligand>
</feature>
<feature type="binding site" evidence="1">
    <location>
        <begin position="87"/>
        <end position="91"/>
    </location>
    <ligand>
        <name>ATP</name>
        <dbReference type="ChEBI" id="CHEBI:30616"/>
    </ligand>
</feature>
<feature type="binding site" evidence="1">
    <location>
        <position position="415"/>
    </location>
    <ligand>
        <name>ATP</name>
        <dbReference type="ChEBI" id="CHEBI:30616"/>
    </ligand>
</feature>
<feature type="binding site" evidence="1">
    <location>
        <begin position="479"/>
        <end position="481"/>
    </location>
    <ligand>
        <name>ATP</name>
        <dbReference type="ChEBI" id="CHEBI:30616"/>
    </ligand>
</feature>
<feature type="binding site" evidence="1">
    <location>
        <position position="495"/>
    </location>
    <ligand>
        <name>ATP</name>
        <dbReference type="ChEBI" id="CHEBI:30616"/>
    </ligand>
</feature>
<organism>
    <name type="scientific">Vibrio cholerae serotype O1 (strain ATCC 39315 / El Tor Inaba N16961)</name>
    <dbReference type="NCBI Taxonomy" id="243277"/>
    <lineage>
        <taxon>Bacteria</taxon>
        <taxon>Pseudomonadati</taxon>
        <taxon>Pseudomonadota</taxon>
        <taxon>Gammaproteobacteria</taxon>
        <taxon>Vibrionales</taxon>
        <taxon>Vibrionaceae</taxon>
        <taxon>Vibrio</taxon>
    </lineage>
</organism>
<proteinExistence type="inferred from homology"/>
<comment type="function">
    <text evidence="1">Together with its co-chaperonin GroES, plays an essential role in assisting protein folding. The GroEL-GroES system forms a nano-cage that allows encapsulation of the non-native substrate proteins and provides a physical environment optimized to promote and accelerate protein folding.</text>
</comment>
<comment type="catalytic activity">
    <reaction evidence="1">
        <text>ATP + H2O + a folded polypeptide = ADP + phosphate + an unfolded polypeptide.</text>
        <dbReference type="EC" id="5.6.1.7"/>
    </reaction>
</comment>
<comment type="subunit">
    <text evidence="1">Forms a cylinder of 14 subunits composed of two heptameric rings stacked back-to-back. Interacts with the co-chaperonin GroES.</text>
</comment>
<comment type="subcellular location">
    <subcellularLocation>
        <location evidence="1">Cytoplasm</location>
    </subcellularLocation>
</comment>
<comment type="similarity">
    <text evidence="1">Belongs to the chaperonin (HSP60) family.</text>
</comment>
<evidence type="ECO:0000255" key="1">
    <source>
        <dbReference type="HAMAP-Rule" id="MF_00600"/>
    </source>
</evidence>